<accession>O78475</accession>
<sequence>MVNIRPDEISSIIRQQIDKYDQAIQVSNVGTVLQIGDGIARVYGLDQVMAGELLEFEDKTIGIALNLESDNVGVVLMGEGRGILEGSSVKATGKIAQVPVGKSYLGRVVNALGTPIDGKGDINCSETRLIESIAPGIISRKSVCEPIQTGITAIDSMIPIGRGQRELIIGDRQTGKSSVAIDTIINQKGEDVVCVYVAVGQKAATVASIVTTLEEKGALDYTCIVAANADDPATLQYIAPYTGAAIAEYFMYNGQATLVIYDDLSKQASAYREMSLLLRRPPGREAFPGDVFYLHSRLLERAAKLSDKLGGGSMTALPVIETQAGDVSAYIPTNVISITDGQIFLSGDLFNAGIRPAINVGISVSRVGSAAQIKAMKQVAGKLKLELAQFAELEAFSQFASDLDQATRNQLARGQRLREILKQPQNSPISVEEQVAIIYTGINGYLDDIAVDKVRRFVTNLRTNLKNSKPQYAEIIRNTKTFNSDAENLLKSAIADTKQSFV</sequence>
<comment type="function">
    <text evidence="1">Produces ATP from ADP in the presence of a proton gradient across the membrane. The alpha chain is a regulatory subunit.</text>
</comment>
<comment type="catalytic activity">
    <reaction evidence="1">
        <text>ATP + H2O + 4 H(+)(in) = ADP + phosphate + 5 H(+)(out)</text>
        <dbReference type="Rhea" id="RHEA:57720"/>
        <dbReference type="ChEBI" id="CHEBI:15377"/>
        <dbReference type="ChEBI" id="CHEBI:15378"/>
        <dbReference type="ChEBI" id="CHEBI:30616"/>
        <dbReference type="ChEBI" id="CHEBI:43474"/>
        <dbReference type="ChEBI" id="CHEBI:456216"/>
        <dbReference type="EC" id="7.1.2.2"/>
    </reaction>
</comment>
<comment type="subunit">
    <text evidence="1">F-type ATPases have 2 components, CF(1) - the catalytic core - and CF(0) - the membrane proton channel. CF(1) has five subunits: alpha(3), beta(3), gamma(1), delta(1), epsilon(1). CF(0) has four main subunits: a, b, b' and c.</text>
</comment>
<comment type="subcellular location">
    <subcellularLocation>
        <location evidence="1">Plastid</location>
        <location evidence="1">Chloroplast thylakoid membrane</location>
        <topology evidence="1">Peripheral membrane protein</topology>
    </subcellularLocation>
</comment>
<comment type="similarity">
    <text evidence="1">Belongs to the ATPase alpha/beta chains family.</text>
</comment>
<organism>
    <name type="scientific">Guillardia theta</name>
    <name type="common">Cryptophyte</name>
    <name type="synonym">Cryptomonas phi</name>
    <dbReference type="NCBI Taxonomy" id="55529"/>
    <lineage>
        <taxon>Eukaryota</taxon>
        <taxon>Cryptophyceae</taxon>
        <taxon>Pyrenomonadales</taxon>
        <taxon>Geminigeraceae</taxon>
        <taxon>Guillardia</taxon>
    </lineage>
</organism>
<gene>
    <name evidence="1" type="primary">atpA</name>
</gene>
<name>ATPA_GUITH</name>
<feature type="chain" id="PRO_0000144377" description="ATP synthase subunit alpha, chloroplastic">
    <location>
        <begin position="1"/>
        <end position="502"/>
    </location>
</feature>
<feature type="binding site" evidence="1">
    <location>
        <begin position="170"/>
        <end position="177"/>
    </location>
    <ligand>
        <name>ATP</name>
        <dbReference type="ChEBI" id="CHEBI:30616"/>
    </ligand>
</feature>
<feature type="site" description="Required for activity" evidence="1">
    <location>
        <position position="363"/>
    </location>
</feature>
<reference key="1">
    <citation type="journal article" date="1999" name="J. Phycol.">
        <title>The atpA gene cluster of a cryptomonad, Guillardia theta: a piece in the puzzle of chloroplast genome development.</title>
        <authorList>
            <person name="Leitsch C.E.W."/>
            <person name="Kowallik K.V."/>
            <person name="Douglas S.E."/>
        </authorList>
    </citation>
    <scope>NUCLEOTIDE SEQUENCE [GENOMIC DNA]</scope>
</reference>
<reference key="2">
    <citation type="journal article" date="1999" name="J. Mol. Evol.">
        <title>The plastid genome of the cryptophyte alga, Guillardia theta: complete sequence and conserved synteny groups confirm its common ancestry with red algae.</title>
        <authorList>
            <person name="Douglas S.E."/>
            <person name="Penny S.L."/>
        </authorList>
    </citation>
    <scope>NUCLEOTIDE SEQUENCE [LARGE SCALE GENOMIC DNA]</scope>
</reference>
<dbReference type="EC" id="7.1.2.2" evidence="1"/>
<dbReference type="EMBL" id="AF041468">
    <property type="protein sequence ID" value="AAC35666.1"/>
    <property type="molecule type" value="Genomic_DNA"/>
</dbReference>
<dbReference type="RefSeq" id="NP_050732.1">
    <property type="nucleotide sequence ID" value="NC_000926.1"/>
</dbReference>
<dbReference type="SMR" id="O78475"/>
<dbReference type="GeneID" id="857037"/>
<dbReference type="HOGENOM" id="CLU_010091_2_1_1"/>
<dbReference type="OMA" id="CEYEPEN"/>
<dbReference type="GO" id="GO:0009535">
    <property type="term" value="C:chloroplast thylakoid membrane"/>
    <property type="evidence" value="ECO:0007669"/>
    <property type="project" value="UniProtKB-SubCell"/>
</dbReference>
<dbReference type="GO" id="GO:0045259">
    <property type="term" value="C:proton-transporting ATP synthase complex"/>
    <property type="evidence" value="ECO:0007669"/>
    <property type="project" value="UniProtKB-KW"/>
</dbReference>
<dbReference type="GO" id="GO:0043531">
    <property type="term" value="F:ADP binding"/>
    <property type="evidence" value="ECO:0007669"/>
    <property type="project" value="TreeGrafter"/>
</dbReference>
<dbReference type="GO" id="GO:0005524">
    <property type="term" value="F:ATP binding"/>
    <property type="evidence" value="ECO:0007669"/>
    <property type="project" value="UniProtKB-UniRule"/>
</dbReference>
<dbReference type="GO" id="GO:0046933">
    <property type="term" value="F:proton-transporting ATP synthase activity, rotational mechanism"/>
    <property type="evidence" value="ECO:0007669"/>
    <property type="project" value="UniProtKB-UniRule"/>
</dbReference>
<dbReference type="CDD" id="cd18113">
    <property type="entry name" value="ATP-synt_F1_alpha_C"/>
    <property type="match status" value="1"/>
</dbReference>
<dbReference type="CDD" id="cd18116">
    <property type="entry name" value="ATP-synt_F1_alpha_N"/>
    <property type="match status" value="1"/>
</dbReference>
<dbReference type="CDD" id="cd01132">
    <property type="entry name" value="F1-ATPase_alpha_CD"/>
    <property type="match status" value="1"/>
</dbReference>
<dbReference type="FunFam" id="1.20.150.20:FF:000001">
    <property type="entry name" value="ATP synthase subunit alpha"/>
    <property type="match status" value="1"/>
</dbReference>
<dbReference type="FunFam" id="2.40.30.20:FF:000001">
    <property type="entry name" value="ATP synthase subunit alpha"/>
    <property type="match status" value="1"/>
</dbReference>
<dbReference type="FunFam" id="3.40.50.300:FF:000002">
    <property type="entry name" value="ATP synthase subunit alpha"/>
    <property type="match status" value="1"/>
</dbReference>
<dbReference type="Gene3D" id="2.40.30.20">
    <property type="match status" value="1"/>
</dbReference>
<dbReference type="Gene3D" id="1.20.150.20">
    <property type="entry name" value="ATP synthase alpha/beta chain, C-terminal domain"/>
    <property type="match status" value="1"/>
</dbReference>
<dbReference type="Gene3D" id="3.40.50.300">
    <property type="entry name" value="P-loop containing nucleotide triphosphate hydrolases"/>
    <property type="match status" value="1"/>
</dbReference>
<dbReference type="HAMAP" id="MF_01346">
    <property type="entry name" value="ATP_synth_alpha_bact"/>
    <property type="match status" value="1"/>
</dbReference>
<dbReference type="InterPro" id="IPR023366">
    <property type="entry name" value="ATP_synth_asu-like_sf"/>
</dbReference>
<dbReference type="InterPro" id="IPR000793">
    <property type="entry name" value="ATP_synth_asu_C"/>
</dbReference>
<dbReference type="InterPro" id="IPR038376">
    <property type="entry name" value="ATP_synth_asu_C_sf"/>
</dbReference>
<dbReference type="InterPro" id="IPR033732">
    <property type="entry name" value="ATP_synth_F1_a_nt-bd_dom"/>
</dbReference>
<dbReference type="InterPro" id="IPR005294">
    <property type="entry name" value="ATP_synth_F1_asu"/>
</dbReference>
<dbReference type="InterPro" id="IPR020003">
    <property type="entry name" value="ATPase_a/bsu_AS"/>
</dbReference>
<dbReference type="InterPro" id="IPR004100">
    <property type="entry name" value="ATPase_F1/V1/A1_a/bsu_N"/>
</dbReference>
<dbReference type="InterPro" id="IPR036121">
    <property type="entry name" value="ATPase_F1/V1/A1_a/bsu_N_sf"/>
</dbReference>
<dbReference type="InterPro" id="IPR000194">
    <property type="entry name" value="ATPase_F1/V1/A1_a/bsu_nucl-bd"/>
</dbReference>
<dbReference type="InterPro" id="IPR027417">
    <property type="entry name" value="P-loop_NTPase"/>
</dbReference>
<dbReference type="NCBIfam" id="TIGR00962">
    <property type="entry name" value="atpA"/>
    <property type="match status" value="1"/>
</dbReference>
<dbReference type="NCBIfam" id="NF009884">
    <property type="entry name" value="PRK13343.1"/>
    <property type="match status" value="1"/>
</dbReference>
<dbReference type="PANTHER" id="PTHR48082">
    <property type="entry name" value="ATP SYNTHASE SUBUNIT ALPHA, MITOCHONDRIAL"/>
    <property type="match status" value="1"/>
</dbReference>
<dbReference type="PANTHER" id="PTHR48082:SF2">
    <property type="entry name" value="ATP SYNTHASE SUBUNIT ALPHA, MITOCHONDRIAL"/>
    <property type="match status" value="1"/>
</dbReference>
<dbReference type="Pfam" id="PF00006">
    <property type="entry name" value="ATP-synt_ab"/>
    <property type="match status" value="1"/>
</dbReference>
<dbReference type="Pfam" id="PF00306">
    <property type="entry name" value="ATP-synt_ab_C"/>
    <property type="match status" value="1"/>
</dbReference>
<dbReference type="Pfam" id="PF02874">
    <property type="entry name" value="ATP-synt_ab_N"/>
    <property type="match status" value="1"/>
</dbReference>
<dbReference type="PIRSF" id="PIRSF039088">
    <property type="entry name" value="F_ATPase_subunit_alpha"/>
    <property type="match status" value="1"/>
</dbReference>
<dbReference type="SUPFAM" id="SSF47917">
    <property type="entry name" value="C-terminal domain of alpha and beta subunits of F1 ATP synthase"/>
    <property type="match status" value="1"/>
</dbReference>
<dbReference type="SUPFAM" id="SSF50615">
    <property type="entry name" value="N-terminal domain of alpha and beta subunits of F1 ATP synthase"/>
    <property type="match status" value="1"/>
</dbReference>
<dbReference type="SUPFAM" id="SSF52540">
    <property type="entry name" value="P-loop containing nucleoside triphosphate hydrolases"/>
    <property type="match status" value="1"/>
</dbReference>
<dbReference type="PROSITE" id="PS00152">
    <property type="entry name" value="ATPASE_ALPHA_BETA"/>
    <property type="match status" value="1"/>
</dbReference>
<keyword id="KW-0066">ATP synthesis</keyword>
<keyword id="KW-0067">ATP-binding</keyword>
<keyword id="KW-0139">CF(1)</keyword>
<keyword id="KW-0150">Chloroplast</keyword>
<keyword id="KW-0375">Hydrogen ion transport</keyword>
<keyword id="KW-0406">Ion transport</keyword>
<keyword id="KW-0472">Membrane</keyword>
<keyword id="KW-0547">Nucleotide-binding</keyword>
<keyword id="KW-0934">Plastid</keyword>
<keyword id="KW-0793">Thylakoid</keyword>
<keyword id="KW-1278">Translocase</keyword>
<keyword id="KW-0813">Transport</keyword>
<protein>
    <recommendedName>
        <fullName evidence="1">ATP synthase subunit alpha, chloroplastic</fullName>
        <ecNumber evidence="1">7.1.2.2</ecNumber>
    </recommendedName>
    <alternativeName>
        <fullName evidence="1">ATP synthase F1 sector subunit alpha</fullName>
    </alternativeName>
    <alternativeName>
        <fullName evidence="1">F-ATPase subunit alpha</fullName>
    </alternativeName>
</protein>
<evidence type="ECO:0000255" key="1">
    <source>
        <dbReference type="HAMAP-Rule" id="MF_01346"/>
    </source>
</evidence>
<geneLocation type="chloroplast"/>
<proteinExistence type="inferred from homology"/>